<keyword id="KW-1185">Reference proteome</keyword>
<keyword id="KW-0687">Ribonucleoprotein</keyword>
<keyword id="KW-0689">Ribosomal protein</keyword>
<keyword id="KW-0694">RNA-binding</keyword>
<keyword id="KW-0699">rRNA-binding</keyword>
<evidence type="ECO:0000255" key="1">
    <source>
        <dbReference type="HAMAP-Rule" id="MF_01343"/>
    </source>
</evidence>
<evidence type="ECO:0000305" key="2"/>
<sequence>MSITVEEKNRVMTEFATKKGDTGSPEVQVAILSSRIATLTEHFKTHKKDNHSRRGLLKLVAQRRKLLDYLKGKDEARYNVLIAKLGLRR</sequence>
<dbReference type="EMBL" id="CP000489">
    <property type="protein sequence ID" value="ABL70844.1"/>
    <property type="molecule type" value="Genomic_DNA"/>
</dbReference>
<dbReference type="RefSeq" id="WP_011749035.1">
    <property type="nucleotide sequence ID" value="NC_008686.1"/>
</dbReference>
<dbReference type="SMR" id="A1B5Q0"/>
<dbReference type="STRING" id="318586.Pden_2760"/>
<dbReference type="EnsemblBacteria" id="ABL70844">
    <property type="protein sequence ID" value="ABL70844"/>
    <property type="gene ID" value="Pden_2760"/>
</dbReference>
<dbReference type="GeneID" id="93451158"/>
<dbReference type="KEGG" id="pde:Pden_2760"/>
<dbReference type="eggNOG" id="COG0184">
    <property type="taxonomic scope" value="Bacteria"/>
</dbReference>
<dbReference type="HOGENOM" id="CLU_148518_0_0_5"/>
<dbReference type="OrthoDB" id="9799262at2"/>
<dbReference type="Proteomes" id="UP000000361">
    <property type="component" value="Chromosome 1"/>
</dbReference>
<dbReference type="GO" id="GO:0022627">
    <property type="term" value="C:cytosolic small ribosomal subunit"/>
    <property type="evidence" value="ECO:0007669"/>
    <property type="project" value="TreeGrafter"/>
</dbReference>
<dbReference type="GO" id="GO:0019843">
    <property type="term" value="F:rRNA binding"/>
    <property type="evidence" value="ECO:0007669"/>
    <property type="project" value="UniProtKB-UniRule"/>
</dbReference>
<dbReference type="GO" id="GO:0003735">
    <property type="term" value="F:structural constituent of ribosome"/>
    <property type="evidence" value="ECO:0007669"/>
    <property type="project" value="InterPro"/>
</dbReference>
<dbReference type="GO" id="GO:0006412">
    <property type="term" value="P:translation"/>
    <property type="evidence" value="ECO:0007669"/>
    <property type="project" value="UniProtKB-UniRule"/>
</dbReference>
<dbReference type="CDD" id="cd00353">
    <property type="entry name" value="Ribosomal_S15p_S13e"/>
    <property type="match status" value="1"/>
</dbReference>
<dbReference type="FunFam" id="1.10.287.10:FF:000002">
    <property type="entry name" value="30S ribosomal protein S15"/>
    <property type="match status" value="1"/>
</dbReference>
<dbReference type="Gene3D" id="6.10.250.3130">
    <property type="match status" value="1"/>
</dbReference>
<dbReference type="Gene3D" id="1.10.287.10">
    <property type="entry name" value="S15/NS1, RNA-binding"/>
    <property type="match status" value="1"/>
</dbReference>
<dbReference type="HAMAP" id="MF_01343_B">
    <property type="entry name" value="Ribosomal_uS15_B"/>
    <property type="match status" value="1"/>
</dbReference>
<dbReference type="InterPro" id="IPR000589">
    <property type="entry name" value="Ribosomal_uS15"/>
</dbReference>
<dbReference type="InterPro" id="IPR005290">
    <property type="entry name" value="Ribosomal_uS15_bac-type"/>
</dbReference>
<dbReference type="InterPro" id="IPR009068">
    <property type="entry name" value="uS15_NS1_RNA-bd_sf"/>
</dbReference>
<dbReference type="NCBIfam" id="TIGR00952">
    <property type="entry name" value="S15_bact"/>
    <property type="match status" value="1"/>
</dbReference>
<dbReference type="PANTHER" id="PTHR23321">
    <property type="entry name" value="RIBOSOMAL PROTEIN S15, BACTERIAL AND ORGANELLAR"/>
    <property type="match status" value="1"/>
</dbReference>
<dbReference type="PANTHER" id="PTHR23321:SF26">
    <property type="entry name" value="SMALL RIBOSOMAL SUBUNIT PROTEIN US15M"/>
    <property type="match status" value="1"/>
</dbReference>
<dbReference type="Pfam" id="PF00312">
    <property type="entry name" value="Ribosomal_S15"/>
    <property type="match status" value="1"/>
</dbReference>
<dbReference type="SMART" id="SM01387">
    <property type="entry name" value="Ribosomal_S15"/>
    <property type="match status" value="1"/>
</dbReference>
<dbReference type="SUPFAM" id="SSF47060">
    <property type="entry name" value="S15/NS1 RNA-binding domain"/>
    <property type="match status" value="1"/>
</dbReference>
<dbReference type="PROSITE" id="PS00362">
    <property type="entry name" value="RIBOSOMAL_S15"/>
    <property type="match status" value="1"/>
</dbReference>
<feature type="chain" id="PRO_1000054833" description="Small ribosomal subunit protein uS15">
    <location>
        <begin position="1"/>
        <end position="89"/>
    </location>
</feature>
<protein>
    <recommendedName>
        <fullName evidence="1">Small ribosomal subunit protein uS15</fullName>
    </recommendedName>
    <alternativeName>
        <fullName evidence="2">30S ribosomal protein S15</fullName>
    </alternativeName>
</protein>
<proteinExistence type="inferred from homology"/>
<gene>
    <name evidence="1" type="primary">rpsO</name>
    <name type="ordered locus">Pden_2760</name>
</gene>
<accession>A1B5Q0</accession>
<reference key="1">
    <citation type="submission" date="2006-12" db="EMBL/GenBank/DDBJ databases">
        <title>Complete sequence of chromosome 1 of Paracoccus denitrificans PD1222.</title>
        <authorList>
            <person name="Copeland A."/>
            <person name="Lucas S."/>
            <person name="Lapidus A."/>
            <person name="Barry K."/>
            <person name="Detter J.C."/>
            <person name="Glavina del Rio T."/>
            <person name="Hammon N."/>
            <person name="Israni S."/>
            <person name="Dalin E."/>
            <person name="Tice H."/>
            <person name="Pitluck S."/>
            <person name="Munk A.C."/>
            <person name="Brettin T."/>
            <person name="Bruce D."/>
            <person name="Han C."/>
            <person name="Tapia R."/>
            <person name="Gilna P."/>
            <person name="Schmutz J."/>
            <person name="Larimer F."/>
            <person name="Land M."/>
            <person name="Hauser L."/>
            <person name="Kyrpides N."/>
            <person name="Lykidis A."/>
            <person name="Spiro S."/>
            <person name="Richardson D.J."/>
            <person name="Moir J.W.B."/>
            <person name="Ferguson S.J."/>
            <person name="van Spanning R.J.M."/>
            <person name="Richardson P."/>
        </authorList>
    </citation>
    <scope>NUCLEOTIDE SEQUENCE [LARGE SCALE GENOMIC DNA]</scope>
    <source>
        <strain>Pd 1222</strain>
    </source>
</reference>
<name>RS15_PARDP</name>
<comment type="function">
    <text evidence="1">One of the primary rRNA binding proteins, it binds directly to 16S rRNA where it helps nucleate assembly of the platform of the 30S subunit by binding and bridging several RNA helices of the 16S rRNA.</text>
</comment>
<comment type="function">
    <text evidence="1">Forms an intersubunit bridge (bridge B4) with the 23S rRNA of the 50S subunit in the ribosome.</text>
</comment>
<comment type="subunit">
    <text evidence="1">Part of the 30S ribosomal subunit. Forms a bridge to the 50S subunit in the 70S ribosome, contacting the 23S rRNA.</text>
</comment>
<comment type="similarity">
    <text evidence="1">Belongs to the universal ribosomal protein uS15 family.</text>
</comment>
<organism>
    <name type="scientific">Paracoccus denitrificans (strain Pd 1222)</name>
    <dbReference type="NCBI Taxonomy" id="318586"/>
    <lineage>
        <taxon>Bacteria</taxon>
        <taxon>Pseudomonadati</taxon>
        <taxon>Pseudomonadota</taxon>
        <taxon>Alphaproteobacteria</taxon>
        <taxon>Rhodobacterales</taxon>
        <taxon>Paracoccaceae</taxon>
        <taxon>Paracoccus</taxon>
    </lineage>
</organism>